<feature type="chain" id="PRO_0000099279" description="A-type inclusion protein A25">
    <location>
        <begin position="1"/>
        <end position="725"/>
    </location>
</feature>
<feature type="repeat" description="1">
    <location>
        <begin position="609"/>
        <end position="635"/>
    </location>
</feature>
<feature type="repeat" description="2">
    <location>
        <begin position="636"/>
        <end position="663"/>
    </location>
</feature>
<feature type="repeat" description="3">
    <location>
        <begin position="664"/>
        <end position="687"/>
    </location>
</feature>
<feature type="repeat" description="4">
    <location>
        <begin position="699"/>
        <end position="725"/>
    </location>
</feature>
<feature type="region of interest" description="4 X approximate tandem repeats">
    <location>
        <begin position="609"/>
        <end position="718"/>
    </location>
</feature>
<feature type="coiled-coil region" evidence="1">
    <location>
        <begin position="418"/>
        <end position="521"/>
    </location>
</feature>
<feature type="coiled-coil region" evidence="1">
    <location>
        <begin position="547"/>
        <end position="719"/>
    </location>
</feature>
<feature type="sequence conflict" description="In Ref. 1; AAA48321 and 3; CAA40574." evidence="4" ref="1 3">
    <original>SK</original>
    <variation>KQ</variation>
    <location>
        <begin position="587"/>
        <end position="588"/>
    </location>
</feature>
<feature type="sequence conflict" description="In Ref. 2; AAA48275." evidence="4" ref="2">
    <original>R</original>
    <variation>H</variation>
    <location>
        <position position="610"/>
    </location>
</feature>
<feature type="sequence conflict" description="In Ref. 1; AAA48321 and 3; CAA40574." evidence="4" ref="1 3">
    <location>
        <position position="619"/>
    </location>
</feature>
<feature type="sequence conflict" description="In Ref. 2; AAA48275." evidence="4" ref="2">
    <original>S</original>
    <variation>R</variation>
    <location>
        <position position="683"/>
    </location>
</feature>
<organism>
    <name type="scientific">Vaccinia virus (strain Western Reserve)</name>
    <name type="common">VACV</name>
    <name type="synonym">Vaccinia virus (strain WR)</name>
    <dbReference type="NCBI Taxonomy" id="10254"/>
    <lineage>
        <taxon>Viruses</taxon>
        <taxon>Varidnaviria</taxon>
        <taxon>Bamfordvirae</taxon>
        <taxon>Nucleocytoviricota</taxon>
        <taxon>Pokkesviricetes</taxon>
        <taxon>Chitovirales</taxon>
        <taxon>Poxviridae</taxon>
        <taxon>Chordopoxvirinae</taxon>
        <taxon>Orthopoxvirus</taxon>
        <taxon>Vaccinia virus</taxon>
    </lineage>
</organism>
<protein>
    <recommendedName>
        <fullName>A-type inclusion protein A25</fullName>
        <shortName>ATI</shortName>
    </recommendedName>
</protein>
<sequence length="725" mass="84351">MEVTNLIEKCTKHSKDFATEVKKLWNDELSSESGLSRKTRNVIRNILRDITKSLTTDKKSKCFRILERSTINGEQIKDVYKTIFNNGVDVESRINTTGKYVLFTVMTYVAAELRLIKSDEIFALLSRFFNMICDIHRKYGCGNMFVGIPAALIILLEIDHINKLFSVFSTRYDAKAYLYTEYFLFLNINHYLLSGSDLFINVAYGAVSFSSPISVPDYIMEALTFKACDHIMKSGDLKYTYAFTKKVKDLFNTKSDSIYQYVRLHEMSYDGVSEDTDDDDEVFAILNLSIDSSVDRYRNRVLLLTPEVASLRKEYSDVEPDYKYLMDEEVPAYDKHLPKPITNTGIEEPHATGGDEDQPIKVVHPPNNDKDDAIKPYNPLEDPNYVPTITRTAIGIADYQLVINKLIEWLDKCEEECGNSGEFKTELEEAKRKLTELNAELSDKLSKIRTLERDSVYKTERIDRLTKEIKEHRDIQNGTDDGSDLLEIDKKTIRELRESLDREREMRSELEKELDTIRNGKVDGSCQRELELSRMWLKQRDDDLRAEIDKRRNVEWELSRLRRDIKECDKYKEDLDKAKTTISNYVSKISTLESEIAKYQQDRDTLSVVRRELEEERRRVRDLESRLDECTRNQEDTQEVDALRSRIRELENKLTDCIESGGGNLTEISRLQSKISDLERQLSECRENATEISRLQSRISDLERQLNDCRRNNETNAETERDATS</sequence>
<dbReference type="EMBL" id="M61187">
    <property type="protein sequence ID" value="AAA48321.1"/>
    <property type="molecule type" value="Genomic_DNA"/>
</dbReference>
<dbReference type="EMBL" id="M76371">
    <property type="protein sequence ID" value="AAA48275.1"/>
    <property type="molecule type" value="Genomic_DNA"/>
</dbReference>
<dbReference type="EMBL" id="X57318">
    <property type="protein sequence ID" value="CAA40574.1"/>
    <property type="molecule type" value="Genomic_DNA"/>
</dbReference>
<dbReference type="EMBL" id="AY243312">
    <property type="protein sequence ID" value="AAO89427.1"/>
    <property type="molecule type" value="Genomic_DNA"/>
</dbReference>
<dbReference type="PIR" id="A41701">
    <property type="entry name" value="WMVZ94"/>
</dbReference>
<dbReference type="RefSeq" id="YP_233030.1">
    <property type="nucleotide sequence ID" value="NC_006998.1"/>
</dbReference>
<dbReference type="SMR" id="P24759"/>
<dbReference type="IntAct" id="P24759">
    <property type="interactions" value="1"/>
</dbReference>
<dbReference type="MINT" id="P24759"/>
<dbReference type="DNASU" id="3707678"/>
<dbReference type="GeneID" id="3707678"/>
<dbReference type="KEGG" id="vg:3707678"/>
<dbReference type="Proteomes" id="UP000000344">
    <property type="component" value="Genome"/>
</dbReference>
<dbReference type="GO" id="GO:0044423">
    <property type="term" value="C:virion component"/>
    <property type="evidence" value="ECO:0007669"/>
    <property type="project" value="UniProtKB-KW"/>
</dbReference>
<dbReference type="GO" id="GO:0016032">
    <property type="term" value="P:viral process"/>
    <property type="evidence" value="ECO:0007669"/>
    <property type="project" value="InterPro"/>
</dbReference>
<dbReference type="Gene3D" id="1.10.287.1490">
    <property type="match status" value="1"/>
</dbReference>
<dbReference type="InterPro" id="IPR007596">
    <property type="entry name" value="Pox_A_type_inc"/>
</dbReference>
<dbReference type="PANTHER" id="PTHR43941">
    <property type="entry name" value="STRUCTURAL MAINTENANCE OF CHROMOSOMES PROTEIN 2"/>
    <property type="match status" value="1"/>
</dbReference>
<dbReference type="Pfam" id="PF04508">
    <property type="entry name" value="Pox_A_type_inc"/>
    <property type="match status" value="4"/>
</dbReference>
<comment type="function">
    <text evidence="3">Structural protein that forms a matrix surrounding the mature virion (MV) through interaction with protein A26. Presence of protein A25 in the virion structurally prevents direct virus-cell fusion mechanism.</text>
</comment>
<comment type="subunit">
    <text evidence="2">Interacts (via N-terminus) with protein A26.</text>
</comment>
<comment type="subcellular location">
    <subcellularLocation>
        <location>Virion</location>
    </subcellularLocation>
    <text>Present above the membrane of mature virions (MV).</text>
</comment>
<comment type="miscellaneous">
    <text>Some orthopoxviruses such as cowpox, ectromelia, and raccoonpox viruses, form large cytoplasmic inclusions within which mature virions are embedded by a process called occlusion. In those viruses, A26 bridges mature virion with inclusion bodies through interactions with proteins A25 and A27 on the mature virion membrane. In vaccinia virus, the protein A25 is deleted in its C-terminal region and no inclusion body is observed.</text>
</comment>
<comment type="similarity">
    <text evidence="4">Belongs to the poxviridae A25 protein family.</text>
</comment>
<name>ATI_VACCW</name>
<evidence type="ECO:0000255" key="1"/>
<evidence type="ECO:0000269" key="2">
    <source>
    </source>
</evidence>
<evidence type="ECO:0000269" key="3">
    <source>
    </source>
</evidence>
<evidence type="ECO:0000305" key="4"/>
<gene>
    <name type="ordered locus">VACWR148</name>
    <name type="ORF">A25</name>
</gene>
<accession>P24759</accession>
<accession>Q80HU8</accession>
<reference key="1">
    <citation type="journal article" date="1991" name="J. Biol. Chem.">
        <title>Identification, sequence, and expression of the gene encoding a Mr 35,000 subunit of the vaccinia virus DNA-dependent RNA polymerase.</title>
        <authorList>
            <person name="Amegadzie B.Y."/>
            <person name="Ahn B.-Y."/>
            <person name="Moss B."/>
        </authorList>
    </citation>
    <scope>NUCLEOTIDE SEQUENCE [GENOMIC DNA]</scope>
</reference>
<reference key="2">
    <citation type="journal article" date="1992" name="Virology">
        <title>Frame-shift mutations within the vaccinia virus A-type inclusion protein gene.</title>
        <authorList>
            <person name="Amegadzie B.Y."/>
            <person name="Sisler J.R."/>
            <person name="Moss B."/>
        </authorList>
    </citation>
    <scope>NUCLEOTIDE SEQUENCE [GENOMIC DNA]</scope>
</reference>
<reference key="3">
    <citation type="journal article" date="1991" name="Virology">
        <title>Isolation and characterization of mutants of vaccinia virus with a modified 94-kDa inclusion protein.</title>
        <authorList>
            <person name="de Carlos A."/>
            <person name="Paez E."/>
        </authorList>
    </citation>
    <scope>NUCLEOTIDE SEQUENCE [GENOMIC DNA]</scope>
</reference>
<reference key="4">
    <citation type="submission" date="2003-02" db="EMBL/GenBank/DDBJ databases">
        <title>Sequencing of the coding region of Vaccinia-WR to an average 9-fold redundancy and an error rate of 0.16/10kb.</title>
        <authorList>
            <person name="Esposito J.J."/>
            <person name="Frace A.M."/>
            <person name="Sammons S.A."/>
            <person name="Olsen-Rasmussen M."/>
            <person name="Osborne J."/>
            <person name="Wohlhueter R."/>
        </authorList>
    </citation>
    <scope>NUCLEOTIDE SEQUENCE [LARGE SCALE GENOMIC DNA]</scope>
</reference>
<reference key="5">
    <citation type="journal article" date="2010" name="J. Virol.">
        <title>Congregation of orthopoxvirus virions in cytoplasmic A-type inclusions is mediated by interactions of a bridging protein (A26p) with a matrix protein (ATIp) and a virion membrane-associated protein (A27p).</title>
        <authorList>
            <person name="Howard A.R."/>
            <person name="Weisberg A.S."/>
            <person name="Moss B."/>
        </authorList>
    </citation>
    <scope>INTERACTION WITH PROTEIN A26</scope>
</reference>
<reference key="6">
    <citation type="journal article" date="2010" name="J. Virol.">
        <title>Vaccinia virus A25 and A26 proteins are fusion suppressors for mature virions and determine strain-specific virus entry pathways into HeLa, CHO-K1, and L cells.</title>
        <authorList>
            <person name="Chang S.J."/>
            <person name="Chang Y.X."/>
            <person name="Izmailyan R."/>
            <person name="Tang Y.L."/>
            <person name="Chang W."/>
        </authorList>
    </citation>
    <scope>FUNCTION</scope>
</reference>
<keyword id="KW-0175">Coiled coil</keyword>
<keyword id="KW-1185">Reference proteome</keyword>
<keyword id="KW-0677">Repeat</keyword>
<keyword id="KW-0946">Virion</keyword>
<proteinExistence type="evidence at protein level"/>
<organismHost>
    <name type="scientific">Bos taurus</name>
    <name type="common">Bovine</name>
    <dbReference type="NCBI Taxonomy" id="9913"/>
</organismHost>